<evidence type="ECO:0000255" key="1">
    <source>
        <dbReference type="HAMAP-Rule" id="MF_00802"/>
    </source>
</evidence>
<sequence length="945" mass="107466">MMPLSPQLQQHWQTVADRLPADFPVAELSPQARSVMAFSDFVEQSVIAQPGWLNELADSAPAAEEWRHYEAWLQERLQAVTDEAGLMRELRLFRRQMMVRIAWAQALSLVREEETLQQLSVLAETLIVAARDWLYAACCKEWGTPCNAEGQPQPLLILGMGKLGGGELNFSSDIDLIFAWPEHGATRGGRRELDNAQFFTRLGQRLIKALDQPTQDGFVYRVDMRLRPFGDSGPLVLSFAALEDYYQEQGRDWERYAMVKARIMGDNDGAYASELRAMLRPFVFRRYIDFSVIQSLRNMKGMIAREVRRRGLKDNIKLGAGGIREIEFIVQVFQLIRGGREPALQQRALLPTLAAIDELHLLPEGDATLLRAAYLFLRRLENLLQSINDEQTQTLPQDELNRARLAWGMHTDDWETLSAQLANHMANVRRVFNELIGDDEAQSPDEQLAEYWRELWQDALEEDDASPALAHLNDADRRSVLALIADFRKELDRRTIGPRGRQVLDQLMPHLLSEICSRADAPLPLARITPLLTGIVTRTTYLELLSEFPGALKHLITLCAASPMVASQLARHPLLLDELLDPNTLYQPTATDAYRDELRQYLLRVPEEDEEQQLEALRQFKQAQQLHIAAADIAGTLPVMKVSDHLTWLAEAILDAVVQQAWGQMVARYGLPTHLHDRQGRGFAVVGYGKLGGWELGYSSDLDLVFLHDCPAEVMTDGEREIDGRQFYLRLAQRIMHLFSTRTSSGILYEVDARLRPSGAAGMLVTTADAFADYQQNEAWTWEHQALVRARVVYGDPALQARFDAIRRDILTTPREGATLQTEVREMREKMRAHLGNKHPNRFDIKADAGGITDIEFITQYLVLRYASDKPKLTRWSDNVRILELLAQNDIMDEEEARALTHAYTTLRDALHHLALQELPGHVAPEAFSREREQVSASWQKWLMA</sequence>
<protein>
    <recommendedName>
        <fullName evidence="1">Bifunctional glutamine synthetase adenylyltransferase/adenylyl-removing enzyme</fullName>
    </recommendedName>
    <alternativeName>
        <fullName evidence="1">ATP:glutamine synthetase adenylyltransferase</fullName>
    </alternativeName>
    <alternativeName>
        <fullName evidence="1">ATase</fullName>
    </alternativeName>
    <domain>
        <recommendedName>
            <fullName evidence="1">Glutamine synthetase adenylyl-L-tyrosine phosphorylase</fullName>
            <ecNumber evidence="1">2.7.7.89</ecNumber>
        </recommendedName>
        <alternativeName>
            <fullName evidence="1">Adenylyl removase</fullName>
            <shortName evidence="1">AR</shortName>
            <shortName evidence="1">AT-N</shortName>
        </alternativeName>
    </domain>
    <domain>
        <recommendedName>
            <fullName evidence="1">Glutamine synthetase adenylyl transferase</fullName>
            <ecNumber evidence="1">2.7.7.42</ecNumber>
        </recommendedName>
        <alternativeName>
            <fullName evidence="1">Adenylyl transferase</fullName>
            <shortName evidence="1">AT</shortName>
            <shortName evidence="1">AT-C</shortName>
        </alternativeName>
    </domain>
</protein>
<feature type="chain" id="PRO_1000047012" description="Bifunctional glutamine synthetase adenylyltransferase/adenylyl-removing enzyme">
    <location>
        <begin position="1"/>
        <end position="945"/>
    </location>
</feature>
<feature type="region of interest" description="Adenylyl removase" evidence="1">
    <location>
        <begin position="1"/>
        <end position="440"/>
    </location>
</feature>
<feature type="region of interest" description="Adenylyl transferase" evidence="1">
    <location>
        <begin position="449"/>
        <end position="945"/>
    </location>
</feature>
<accession>A6TE32</accession>
<name>GLNE_KLEP7</name>
<gene>
    <name evidence="1" type="primary">glnE</name>
    <name type="ordered locus">KPN78578_33920</name>
    <name type="ORF">KPN_03457</name>
</gene>
<keyword id="KW-0067">ATP-binding</keyword>
<keyword id="KW-0460">Magnesium</keyword>
<keyword id="KW-0511">Multifunctional enzyme</keyword>
<keyword id="KW-0547">Nucleotide-binding</keyword>
<keyword id="KW-0548">Nucleotidyltransferase</keyword>
<keyword id="KW-0808">Transferase</keyword>
<comment type="function">
    <text evidence="1">Involved in the regulation of glutamine synthetase GlnA, a key enzyme in the process to assimilate ammonia. When cellular nitrogen levels are high, the C-terminal adenylyl transferase (AT) inactivates GlnA by covalent transfer of an adenylyl group from ATP to specific tyrosine residue of GlnA, thus reducing its activity. Conversely, when nitrogen levels are low, the N-terminal adenylyl removase (AR) activates GlnA by removing the adenylyl group by phosphorolysis, increasing its activity. The regulatory region of GlnE binds the signal transduction protein PII (GlnB) which indicates the nitrogen status of the cell.</text>
</comment>
<comment type="catalytic activity">
    <reaction evidence="1">
        <text>[glutamine synthetase]-O(4)-(5'-adenylyl)-L-tyrosine + phosphate = [glutamine synthetase]-L-tyrosine + ADP</text>
        <dbReference type="Rhea" id="RHEA:43716"/>
        <dbReference type="Rhea" id="RHEA-COMP:10660"/>
        <dbReference type="Rhea" id="RHEA-COMP:10661"/>
        <dbReference type="ChEBI" id="CHEBI:43474"/>
        <dbReference type="ChEBI" id="CHEBI:46858"/>
        <dbReference type="ChEBI" id="CHEBI:83624"/>
        <dbReference type="ChEBI" id="CHEBI:456216"/>
        <dbReference type="EC" id="2.7.7.89"/>
    </reaction>
</comment>
<comment type="catalytic activity">
    <reaction evidence="1">
        <text>[glutamine synthetase]-L-tyrosine + ATP = [glutamine synthetase]-O(4)-(5'-adenylyl)-L-tyrosine + diphosphate</text>
        <dbReference type="Rhea" id="RHEA:18589"/>
        <dbReference type="Rhea" id="RHEA-COMP:10660"/>
        <dbReference type="Rhea" id="RHEA-COMP:10661"/>
        <dbReference type="ChEBI" id="CHEBI:30616"/>
        <dbReference type="ChEBI" id="CHEBI:33019"/>
        <dbReference type="ChEBI" id="CHEBI:46858"/>
        <dbReference type="ChEBI" id="CHEBI:83624"/>
        <dbReference type="EC" id="2.7.7.42"/>
    </reaction>
</comment>
<comment type="cofactor">
    <cofactor evidence="1">
        <name>Mg(2+)</name>
        <dbReference type="ChEBI" id="CHEBI:18420"/>
    </cofactor>
</comment>
<comment type="similarity">
    <text evidence="1">Belongs to the GlnE family.</text>
</comment>
<dbReference type="EC" id="2.7.7.89" evidence="1"/>
<dbReference type="EC" id="2.7.7.42" evidence="1"/>
<dbReference type="EMBL" id="CP000647">
    <property type="protein sequence ID" value="ABR78853.1"/>
    <property type="molecule type" value="Genomic_DNA"/>
</dbReference>
<dbReference type="RefSeq" id="WP_014906913.1">
    <property type="nucleotide sequence ID" value="NC_009648.1"/>
</dbReference>
<dbReference type="SMR" id="A6TE32"/>
<dbReference type="STRING" id="272620.KPN_03457"/>
<dbReference type="jPOST" id="A6TE32"/>
<dbReference type="PaxDb" id="272620-KPN_03457"/>
<dbReference type="EnsemblBacteria" id="ABR78853">
    <property type="protein sequence ID" value="ABR78853"/>
    <property type="gene ID" value="KPN_03457"/>
</dbReference>
<dbReference type="KEGG" id="kpn:KPN_03457"/>
<dbReference type="HOGENOM" id="CLU_006233_0_1_6"/>
<dbReference type="Proteomes" id="UP000000265">
    <property type="component" value="Chromosome"/>
</dbReference>
<dbReference type="GO" id="GO:0005829">
    <property type="term" value="C:cytosol"/>
    <property type="evidence" value="ECO:0007669"/>
    <property type="project" value="TreeGrafter"/>
</dbReference>
<dbReference type="GO" id="GO:0008882">
    <property type="term" value="F:[glutamate-ammonia-ligase] adenylyltransferase activity"/>
    <property type="evidence" value="ECO:0007669"/>
    <property type="project" value="UniProtKB-UniRule"/>
</dbReference>
<dbReference type="GO" id="GO:0047388">
    <property type="term" value="F:[glutamine synthetase]-adenylyl-L-tyrosine phosphorylase activity"/>
    <property type="evidence" value="ECO:0007669"/>
    <property type="project" value="UniProtKB-EC"/>
</dbReference>
<dbReference type="GO" id="GO:0005524">
    <property type="term" value="F:ATP binding"/>
    <property type="evidence" value="ECO:0007669"/>
    <property type="project" value="UniProtKB-UniRule"/>
</dbReference>
<dbReference type="GO" id="GO:0000287">
    <property type="term" value="F:magnesium ion binding"/>
    <property type="evidence" value="ECO:0007669"/>
    <property type="project" value="UniProtKB-UniRule"/>
</dbReference>
<dbReference type="GO" id="GO:0000820">
    <property type="term" value="P:regulation of glutamine family amino acid metabolic process"/>
    <property type="evidence" value="ECO:0007669"/>
    <property type="project" value="UniProtKB-UniRule"/>
</dbReference>
<dbReference type="CDD" id="cd05401">
    <property type="entry name" value="NT_GlnE_GlnD_like"/>
    <property type="match status" value="2"/>
</dbReference>
<dbReference type="FunFam" id="1.10.4050.10:FF:000001">
    <property type="entry name" value="Bifunctional glutamine synthetase adenylyltransferase/adenylyl-removing enzyme"/>
    <property type="match status" value="1"/>
</dbReference>
<dbReference type="FunFam" id="1.20.120.1510:FF:000001">
    <property type="entry name" value="Bifunctional glutamine synthetase adenylyltransferase/adenylyl-removing enzyme"/>
    <property type="match status" value="1"/>
</dbReference>
<dbReference type="FunFam" id="1.20.120.330:FF:000005">
    <property type="entry name" value="Bifunctional glutamine synthetase adenylyltransferase/adenylyl-removing enzyme"/>
    <property type="match status" value="1"/>
</dbReference>
<dbReference type="FunFam" id="1.20.120.330:FF:000008">
    <property type="entry name" value="Bifunctional glutamine synthetase adenylyltransferase/adenylyl-removing enzyme"/>
    <property type="match status" value="1"/>
</dbReference>
<dbReference type="FunFam" id="3.30.460.10:FF:000009">
    <property type="entry name" value="Bifunctional glutamine synthetase adenylyltransferase/adenylyl-removing enzyme"/>
    <property type="match status" value="1"/>
</dbReference>
<dbReference type="FunFam" id="3.30.460.10:FF:000014">
    <property type="entry name" value="Bifunctional glutamine synthetase adenylyltransferase/adenylyl-removing enzyme"/>
    <property type="match status" value="1"/>
</dbReference>
<dbReference type="Gene3D" id="1.20.120.1510">
    <property type="match status" value="1"/>
</dbReference>
<dbReference type="Gene3D" id="3.30.460.10">
    <property type="entry name" value="Beta Polymerase, domain 2"/>
    <property type="match status" value="2"/>
</dbReference>
<dbReference type="Gene3D" id="1.10.4050.10">
    <property type="entry name" value="Glutamine synthase adenylyltransferase GlnE"/>
    <property type="match status" value="1"/>
</dbReference>
<dbReference type="Gene3D" id="1.20.120.330">
    <property type="entry name" value="Nucleotidyltransferases domain 2"/>
    <property type="match status" value="2"/>
</dbReference>
<dbReference type="HAMAP" id="MF_00802">
    <property type="entry name" value="GlnE"/>
    <property type="match status" value="1"/>
</dbReference>
<dbReference type="InterPro" id="IPR023057">
    <property type="entry name" value="GlnE"/>
</dbReference>
<dbReference type="InterPro" id="IPR005190">
    <property type="entry name" value="GlnE_rpt_dom"/>
</dbReference>
<dbReference type="InterPro" id="IPR043519">
    <property type="entry name" value="NT_sf"/>
</dbReference>
<dbReference type="InterPro" id="IPR013546">
    <property type="entry name" value="PII_UdlTrfase/GS_AdlTrfase"/>
</dbReference>
<dbReference type="NCBIfam" id="NF008292">
    <property type="entry name" value="PRK11072.1"/>
    <property type="match status" value="1"/>
</dbReference>
<dbReference type="PANTHER" id="PTHR30621:SF0">
    <property type="entry name" value="BIFUNCTIONAL GLUTAMINE SYNTHETASE ADENYLYLTRANSFERASE_ADENYLYL-REMOVING ENZYME"/>
    <property type="match status" value="1"/>
</dbReference>
<dbReference type="PANTHER" id="PTHR30621">
    <property type="entry name" value="GLUTAMINE SYNTHETASE ADENYLYLTRANSFERASE"/>
    <property type="match status" value="1"/>
</dbReference>
<dbReference type="Pfam" id="PF08335">
    <property type="entry name" value="GlnD_UR_UTase"/>
    <property type="match status" value="2"/>
</dbReference>
<dbReference type="Pfam" id="PF03710">
    <property type="entry name" value="GlnE"/>
    <property type="match status" value="2"/>
</dbReference>
<dbReference type="SUPFAM" id="SSF81301">
    <property type="entry name" value="Nucleotidyltransferase"/>
    <property type="match status" value="2"/>
</dbReference>
<dbReference type="SUPFAM" id="SSF81593">
    <property type="entry name" value="Nucleotidyltransferase substrate binding subunit/domain"/>
    <property type="match status" value="2"/>
</dbReference>
<organism>
    <name type="scientific">Klebsiella pneumoniae subsp. pneumoniae (strain ATCC 700721 / MGH 78578)</name>
    <dbReference type="NCBI Taxonomy" id="272620"/>
    <lineage>
        <taxon>Bacteria</taxon>
        <taxon>Pseudomonadati</taxon>
        <taxon>Pseudomonadota</taxon>
        <taxon>Gammaproteobacteria</taxon>
        <taxon>Enterobacterales</taxon>
        <taxon>Enterobacteriaceae</taxon>
        <taxon>Klebsiella/Raoultella group</taxon>
        <taxon>Klebsiella</taxon>
        <taxon>Klebsiella pneumoniae complex</taxon>
    </lineage>
</organism>
<reference key="1">
    <citation type="submission" date="2006-09" db="EMBL/GenBank/DDBJ databases">
        <authorList>
            <consortium name="The Klebsiella pneumonia Genome Sequencing Project"/>
            <person name="McClelland M."/>
            <person name="Sanderson E.K."/>
            <person name="Spieth J."/>
            <person name="Clifton W.S."/>
            <person name="Latreille P."/>
            <person name="Sabo A."/>
            <person name="Pepin K."/>
            <person name="Bhonagiri V."/>
            <person name="Porwollik S."/>
            <person name="Ali J."/>
            <person name="Wilson R.K."/>
        </authorList>
    </citation>
    <scope>NUCLEOTIDE SEQUENCE [LARGE SCALE GENOMIC DNA]</scope>
    <source>
        <strain>ATCC 700721 / MGH 78578</strain>
    </source>
</reference>
<proteinExistence type="inferred from homology"/>